<organism>
    <name type="scientific">Desulforamulus reducens (strain ATCC BAA-1160 / DSM 100696 / MI-1)</name>
    <name type="common">Desulfotomaculum reducens</name>
    <dbReference type="NCBI Taxonomy" id="349161"/>
    <lineage>
        <taxon>Bacteria</taxon>
        <taxon>Bacillati</taxon>
        <taxon>Bacillota</taxon>
        <taxon>Clostridia</taxon>
        <taxon>Eubacteriales</taxon>
        <taxon>Peptococcaceae</taxon>
        <taxon>Desulforamulus</taxon>
    </lineage>
</organism>
<proteinExistence type="inferred from homology"/>
<feature type="chain" id="PRO_1000074456" description="UDP-N-acetylglucosamine--N-acetylmuramyl-(pentapeptide) pyrophosphoryl-undecaprenol N-acetylglucosamine transferase">
    <location>
        <begin position="1"/>
        <end position="372"/>
    </location>
</feature>
<feature type="binding site" evidence="1">
    <location>
        <begin position="10"/>
        <end position="12"/>
    </location>
    <ligand>
        <name>UDP-N-acetyl-alpha-D-glucosamine</name>
        <dbReference type="ChEBI" id="CHEBI:57705"/>
    </ligand>
</feature>
<feature type="binding site" evidence="1">
    <location>
        <position position="124"/>
    </location>
    <ligand>
        <name>UDP-N-acetyl-alpha-D-glucosamine</name>
        <dbReference type="ChEBI" id="CHEBI:57705"/>
    </ligand>
</feature>
<feature type="binding site" evidence="1">
    <location>
        <position position="166"/>
    </location>
    <ligand>
        <name>UDP-N-acetyl-alpha-D-glucosamine</name>
        <dbReference type="ChEBI" id="CHEBI:57705"/>
    </ligand>
</feature>
<feature type="binding site" evidence="1">
    <location>
        <position position="196"/>
    </location>
    <ligand>
        <name>UDP-N-acetyl-alpha-D-glucosamine</name>
        <dbReference type="ChEBI" id="CHEBI:57705"/>
    </ligand>
</feature>
<feature type="binding site" evidence="1">
    <location>
        <position position="256"/>
    </location>
    <ligand>
        <name>UDP-N-acetyl-alpha-D-glucosamine</name>
        <dbReference type="ChEBI" id="CHEBI:57705"/>
    </ligand>
</feature>
<feature type="binding site" evidence="1">
    <location>
        <position position="301"/>
    </location>
    <ligand>
        <name>UDP-N-acetyl-alpha-D-glucosamine</name>
        <dbReference type="ChEBI" id="CHEBI:57705"/>
    </ligand>
</feature>
<comment type="function">
    <text evidence="1">Cell wall formation. Catalyzes the transfer of a GlcNAc subunit on undecaprenyl-pyrophosphoryl-MurNAc-pentapeptide (lipid intermediate I) to form undecaprenyl-pyrophosphoryl-MurNAc-(pentapeptide)GlcNAc (lipid intermediate II).</text>
</comment>
<comment type="catalytic activity">
    <reaction evidence="1">
        <text>di-trans,octa-cis-undecaprenyl diphospho-N-acetyl-alpha-D-muramoyl-L-alanyl-D-glutamyl-meso-2,6-diaminopimeloyl-D-alanyl-D-alanine + UDP-N-acetyl-alpha-D-glucosamine = di-trans,octa-cis-undecaprenyl diphospho-[N-acetyl-alpha-D-glucosaminyl-(1-&gt;4)]-N-acetyl-alpha-D-muramoyl-L-alanyl-D-glutamyl-meso-2,6-diaminopimeloyl-D-alanyl-D-alanine + UDP + H(+)</text>
        <dbReference type="Rhea" id="RHEA:31227"/>
        <dbReference type="ChEBI" id="CHEBI:15378"/>
        <dbReference type="ChEBI" id="CHEBI:57705"/>
        <dbReference type="ChEBI" id="CHEBI:58223"/>
        <dbReference type="ChEBI" id="CHEBI:61387"/>
        <dbReference type="ChEBI" id="CHEBI:61388"/>
        <dbReference type="EC" id="2.4.1.227"/>
    </reaction>
</comment>
<comment type="pathway">
    <text evidence="1">Cell wall biogenesis; peptidoglycan biosynthesis.</text>
</comment>
<comment type="subcellular location">
    <subcellularLocation>
        <location evidence="1">Cell membrane</location>
        <topology evidence="1">Peripheral membrane protein</topology>
        <orientation evidence="1">Cytoplasmic side</orientation>
    </subcellularLocation>
</comment>
<comment type="similarity">
    <text evidence="1">Belongs to the glycosyltransferase 28 family. MurG subfamily.</text>
</comment>
<sequence>MRAIITGGGTGGHIYPALAIARGLQSRFSKVQILYVGTNRGLEADIVPKANFPFQAITVSGLQRKISLENFKVLWQAYRGYREAVGIIKTFNPDVVIGTGGYVCGPVVMAAARRGIPTLIHEQNAFPGITNRILSKFADQVTVTFEDSIRYFGNKDNITLTGLPVRPEILQAERQTALEMFKLKNDKLTLLVFGGSRGARKINQAMVETIKKYGNDERLQILHATGQAGYEEFMQELKDNGISLEHYGNIIIKPYIYNMHEALVAADMVVSRAGAATLAELTVLGLPSILIPYPYASENHQEHNARALAERGAAVLIKDSQLTGEKLIQAIKDMLQNKEKLKNMAKSSQKLGRPEALSDIIKCVEKILPRQQ</sequence>
<keyword id="KW-0131">Cell cycle</keyword>
<keyword id="KW-0132">Cell division</keyword>
<keyword id="KW-1003">Cell membrane</keyword>
<keyword id="KW-0133">Cell shape</keyword>
<keyword id="KW-0961">Cell wall biogenesis/degradation</keyword>
<keyword id="KW-0328">Glycosyltransferase</keyword>
<keyword id="KW-0472">Membrane</keyword>
<keyword id="KW-0573">Peptidoglycan synthesis</keyword>
<keyword id="KW-1185">Reference proteome</keyword>
<keyword id="KW-0808">Transferase</keyword>
<reference key="1">
    <citation type="submission" date="2007-03" db="EMBL/GenBank/DDBJ databases">
        <title>Complete sequence of Desulfotomaculum reducens MI-1.</title>
        <authorList>
            <consortium name="US DOE Joint Genome Institute"/>
            <person name="Copeland A."/>
            <person name="Lucas S."/>
            <person name="Lapidus A."/>
            <person name="Barry K."/>
            <person name="Detter J.C."/>
            <person name="Glavina del Rio T."/>
            <person name="Hammon N."/>
            <person name="Israni S."/>
            <person name="Dalin E."/>
            <person name="Tice H."/>
            <person name="Pitluck S."/>
            <person name="Sims D."/>
            <person name="Brettin T."/>
            <person name="Bruce D."/>
            <person name="Han C."/>
            <person name="Tapia R."/>
            <person name="Schmutz J."/>
            <person name="Larimer F."/>
            <person name="Land M."/>
            <person name="Hauser L."/>
            <person name="Kyrpides N."/>
            <person name="Kim E."/>
            <person name="Tebo B.M."/>
            <person name="Richardson P."/>
        </authorList>
    </citation>
    <scope>NUCLEOTIDE SEQUENCE [LARGE SCALE GENOMIC DNA]</scope>
    <source>
        <strain>ATCC BAA-1160 / DSM 100696 / MI-1</strain>
    </source>
</reference>
<gene>
    <name evidence="1" type="primary">murG</name>
    <name type="ordered locus">Dred_0675</name>
</gene>
<evidence type="ECO:0000255" key="1">
    <source>
        <dbReference type="HAMAP-Rule" id="MF_00033"/>
    </source>
</evidence>
<accession>A4J2B1</accession>
<protein>
    <recommendedName>
        <fullName evidence="1">UDP-N-acetylglucosamine--N-acetylmuramyl-(pentapeptide) pyrophosphoryl-undecaprenol N-acetylglucosamine transferase</fullName>
        <ecNumber evidence="1">2.4.1.227</ecNumber>
    </recommendedName>
    <alternativeName>
        <fullName evidence="1">Undecaprenyl-PP-MurNAc-pentapeptide-UDPGlcNAc GlcNAc transferase</fullName>
    </alternativeName>
</protein>
<dbReference type="EC" id="2.4.1.227" evidence="1"/>
<dbReference type="EMBL" id="CP000612">
    <property type="protein sequence ID" value="ABO49214.1"/>
    <property type="molecule type" value="Genomic_DNA"/>
</dbReference>
<dbReference type="RefSeq" id="WP_011877050.1">
    <property type="nucleotide sequence ID" value="NC_009253.1"/>
</dbReference>
<dbReference type="SMR" id="A4J2B1"/>
<dbReference type="STRING" id="349161.Dred_0675"/>
<dbReference type="CAZy" id="GT28">
    <property type="family name" value="Glycosyltransferase Family 28"/>
</dbReference>
<dbReference type="KEGG" id="drm:Dred_0675"/>
<dbReference type="eggNOG" id="COG0707">
    <property type="taxonomic scope" value="Bacteria"/>
</dbReference>
<dbReference type="HOGENOM" id="CLU_037404_0_1_9"/>
<dbReference type="OrthoDB" id="9808936at2"/>
<dbReference type="UniPathway" id="UPA00219"/>
<dbReference type="Proteomes" id="UP000001556">
    <property type="component" value="Chromosome"/>
</dbReference>
<dbReference type="GO" id="GO:0005886">
    <property type="term" value="C:plasma membrane"/>
    <property type="evidence" value="ECO:0007669"/>
    <property type="project" value="UniProtKB-SubCell"/>
</dbReference>
<dbReference type="GO" id="GO:0051991">
    <property type="term" value="F:UDP-N-acetyl-D-glucosamine:N-acetylmuramoyl-L-alanyl-D-glutamyl-meso-2,6-diaminopimelyl-D-alanyl-D-alanine-diphosphoundecaprenol 4-beta-N-acetylglucosaminlytransferase activity"/>
    <property type="evidence" value="ECO:0007669"/>
    <property type="project" value="RHEA"/>
</dbReference>
<dbReference type="GO" id="GO:0050511">
    <property type="term" value="F:undecaprenyldiphospho-muramoylpentapeptide beta-N-acetylglucosaminyltransferase activity"/>
    <property type="evidence" value="ECO:0007669"/>
    <property type="project" value="UniProtKB-UniRule"/>
</dbReference>
<dbReference type="GO" id="GO:0005975">
    <property type="term" value="P:carbohydrate metabolic process"/>
    <property type="evidence" value="ECO:0007669"/>
    <property type="project" value="InterPro"/>
</dbReference>
<dbReference type="GO" id="GO:0051301">
    <property type="term" value="P:cell division"/>
    <property type="evidence" value="ECO:0007669"/>
    <property type="project" value="UniProtKB-KW"/>
</dbReference>
<dbReference type="GO" id="GO:0071555">
    <property type="term" value="P:cell wall organization"/>
    <property type="evidence" value="ECO:0007669"/>
    <property type="project" value="UniProtKB-KW"/>
</dbReference>
<dbReference type="GO" id="GO:0030259">
    <property type="term" value="P:lipid glycosylation"/>
    <property type="evidence" value="ECO:0007669"/>
    <property type="project" value="UniProtKB-UniRule"/>
</dbReference>
<dbReference type="GO" id="GO:0009252">
    <property type="term" value="P:peptidoglycan biosynthetic process"/>
    <property type="evidence" value="ECO:0007669"/>
    <property type="project" value="UniProtKB-UniRule"/>
</dbReference>
<dbReference type="GO" id="GO:0008360">
    <property type="term" value="P:regulation of cell shape"/>
    <property type="evidence" value="ECO:0007669"/>
    <property type="project" value="UniProtKB-KW"/>
</dbReference>
<dbReference type="CDD" id="cd03785">
    <property type="entry name" value="GT28_MurG"/>
    <property type="match status" value="1"/>
</dbReference>
<dbReference type="Gene3D" id="3.40.50.2000">
    <property type="entry name" value="Glycogen Phosphorylase B"/>
    <property type="match status" value="2"/>
</dbReference>
<dbReference type="HAMAP" id="MF_00033">
    <property type="entry name" value="MurG"/>
    <property type="match status" value="1"/>
</dbReference>
<dbReference type="InterPro" id="IPR006009">
    <property type="entry name" value="GlcNAc_MurG"/>
</dbReference>
<dbReference type="InterPro" id="IPR007235">
    <property type="entry name" value="Glyco_trans_28_C"/>
</dbReference>
<dbReference type="InterPro" id="IPR004276">
    <property type="entry name" value="GlycoTrans_28_N"/>
</dbReference>
<dbReference type="NCBIfam" id="TIGR01133">
    <property type="entry name" value="murG"/>
    <property type="match status" value="1"/>
</dbReference>
<dbReference type="PANTHER" id="PTHR21015:SF22">
    <property type="entry name" value="GLYCOSYLTRANSFERASE"/>
    <property type="match status" value="1"/>
</dbReference>
<dbReference type="PANTHER" id="PTHR21015">
    <property type="entry name" value="UDP-N-ACETYLGLUCOSAMINE--N-ACETYLMURAMYL-(PENTAPEPTIDE) PYROPHOSPHORYL-UNDECAPRENOL N-ACETYLGLUCOSAMINE TRANSFERASE 1"/>
    <property type="match status" value="1"/>
</dbReference>
<dbReference type="Pfam" id="PF04101">
    <property type="entry name" value="Glyco_tran_28_C"/>
    <property type="match status" value="1"/>
</dbReference>
<dbReference type="Pfam" id="PF03033">
    <property type="entry name" value="Glyco_transf_28"/>
    <property type="match status" value="1"/>
</dbReference>
<dbReference type="SUPFAM" id="SSF53756">
    <property type="entry name" value="UDP-Glycosyltransferase/glycogen phosphorylase"/>
    <property type="match status" value="1"/>
</dbReference>
<name>MURG_DESRM</name>